<accession>P29790</accession>
<dbReference type="EMBL" id="X63606">
    <property type="protein sequence ID" value="CAA45152.1"/>
    <property type="molecule type" value="mRNA"/>
</dbReference>
<dbReference type="PIR" id="S22486">
    <property type="entry name" value="PWNTG"/>
</dbReference>
<dbReference type="RefSeq" id="NP_001312843.1">
    <property type="nucleotide sequence ID" value="NM_001325914.1"/>
</dbReference>
<dbReference type="SMR" id="P29790"/>
<dbReference type="STRING" id="4097.P29790"/>
<dbReference type="PaxDb" id="4097-P29790"/>
<dbReference type="ProMEX" id="P29790"/>
<dbReference type="GeneID" id="107813955"/>
<dbReference type="KEGG" id="nta:107813955"/>
<dbReference type="OrthoDB" id="239812at2759"/>
<dbReference type="Proteomes" id="UP000084051">
    <property type="component" value="Unplaced"/>
</dbReference>
<dbReference type="GO" id="GO:0009535">
    <property type="term" value="C:chloroplast thylakoid membrane"/>
    <property type="evidence" value="ECO:0007669"/>
    <property type="project" value="UniProtKB-SubCell"/>
</dbReference>
<dbReference type="GO" id="GO:0045259">
    <property type="term" value="C:proton-transporting ATP synthase complex"/>
    <property type="evidence" value="ECO:0007669"/>
    <property type="project" value="UniProtKB-KW"/>
</dbReference>
<dbReference type="GO" id="GO:0046933">
    <property type="term" value="F:proton-transporting ATP synthase activity, rotational mechanism"/>
    <property type="evidence" value="ECO:0007669"/>
    <property type="project" value="InterPro"/>
</dbReference>
<dbReference type="GO" id="GO:0015986">
    <property type="term" value="P:proton motive force-driven ATP synthesis"/>
    <property type="evidence" value="ECO:0000318"/>
    <property type="project" value="GO_Central"/>
</dbReference>
<dbReference type="CDD" id="cd12151">
    <property type="entry name" value="F1-ATPase_gamma"/>
    <property type="match status" value="1"/>
</dbReference>
<dbReference type="FunFam" id="1.10.287.80:FF:000003">
    <property type="entry name" value="ATP synthase gamma chain, chloroplastic"/>
    <property type="match status" value="1"/>
</dbReference>
<dbReference type="FunFam" id="1.10.287.80:FF:000004">
    <property type="entry name" value="ATP synthase gamma chain, chloroplastic"/>
    <property type="match status" value="1"/>
</dbReference>
<dbReference type="FunFam" id="3.40.1380.10:FF:000004">
    <property type="entry name" value="ATP synthase gamma chain, chloroplastic"/>
    <property type="match status" value="1"/>
</dbReference>
<dbReference type="Gene3D" id="3.40.1380.10">
    <property type="match status" value="1"/>
</dbReference>
<dbReference type="Gene3D" id="1.10.287.80">
    <property type="entry name" value="ATP synthase, gamma subunit, helix hairpin domain"/>
    <property type="match status" value="2"/>
</dbReference>
<dbReference type="HAMAP" id="MF_00815">
    <property type="entry name" value="ATP_synth_gamma_bact"/>
    <property type="match status" value="1"/>
</dbReference>
<dbReference type="InterPro" id="IPR035968">
    <property type="entry name" value="ATP_synth_F1_ATPase_gsu"/>
</dbReference>
<dbReference type="InterPro" id="IPR000131">
    <property type="entry name" value="ATP_synth_F1_gsu"/>
</dbReference>
<dbReference type="InterPro" id="IPR023632">
    <property type="entry name" value="ATP_synth_F1_gsu_CS"/>
</dbReference>
<dbReference type="NCBIfam" id="TIGR01146">
    <property type="entry name" value="ATPsyn_F1gamma"/>
    <property type="match status" value="1"/>
</dbReference>
<dbReference type="NCBIfam" id="NF004145">
    <property type="entry name" value="PRK05621.1-2"/>
    <property type="match status" value="1"/>
</dbReference>
<dbReference type="PANTHER" id="PTHR11693">
    <property type="entry name" value="ATP SYNTHASE GAMMA CHAIN"/>
    <property type="match status" value="1"/>
</dbReference>
<dbReference type="PANTHER" id="PTHR11693:SF41">
    <property type="entry name" value="ATP SYNTHASE GAMMA CHAIN, CHLOROPLASTIC"/>
    <property type="match status" value="1"/>
</dbReference>
<dbReference type="Pfam" id="PF00231">
    <property type="entry name" value="ATP-synt"/>
    <property type="match status" value="1"/>
</dbReference>
<dbReference type="PRINTS" id="PR00126">
    <property type="entry name" value="ATPASEGAMMA"/>
</dbReference>
<dbReference type="SUPFAM" id="SSF52943">
    <property type="entry name" value="ATP synthase (F1-ATPase), gamma subunit"/>
    <property type="match status" value="1"/>
</dbReference>
<dbReference type="PROSITE" id="PS00153">
    <property type="entry name" value="ATPASE_GAMMA"/>
    <property type="match status" value="1"/>
</dbReference>
<proteinExistence type="evidence at protein level"/>
<protein>
    <recommendedName>
        <fullName>ATP synthase gamma chain, chloroplastic</fullName>
    </recommendedName>
    <alternativeName>
        <fullName>F-ATPase gamma subunit</fullName>
    </alternativeName>
</protein>
<gene>
    <name type="primary">ATPC</name>
</gene>
<feature type="transit peptide" description="Chloroplast" evidence="3">
    <location>
        <begin position="1"/>
        <end position="55"/>
    </location>
</feature>
<feature type="chain" id="PRO_0000002681" description="ATP synthase gamma chain, chloroplastic">
    <location>
        <begin position="56"/>
        <end position="377"/>
    </location>
</feature>
<feature type="region of interest" description="Disordered" evidence="2">
    <location>
        <begin position="30"/>
        <end position="52"/>
    </location>
</feature>
<feature type="compositionally biased region" description="Low complexity" evidence="2">
    <location>
        <begin position="37"/>
        <end position="52"/>
    </location>
</feature>
<feature type="active site" evidence="1">
    <location>
        <position position="143"/>
    </location>
</feature>
<feature type="disulfide bond" evidence="1">
    <location>
        <begin position="253"/>
        <end position="259"/>
    </location>
</feature>
<name>ATPG_TOBAC</name>
<comment type="function">
    <text>Produces ATP from ADP in the presence of a proton gradient across the membrane. The gamma chain is believed to be important in regulating ATPase activity and the flow of protons through the CF(0) complex.</text>
</comment>
<comment type="subunit">
    <text evidence="1">F-type ATPases have 2 components, CF(1) - the catalytic core - and CF(0) - the membrane proton channel. CF(1) has five subunits: alpha(3), beta(3), gamma(1), delta(1), epsilon(1). CF(0) has four main subunits: a, b, b' and c (By similarity).</text>
</comment>
<comment type="subcellular location">
    <subcellularLocation>
        <location evidence="1">Plastid</location>
        <location evidence="1">Chloroplast thylakoid membrane</location>
        <topology evidence="1">Peripheral membrane protein</topology>
    </subcellularLocation>
</comment>
<comment type="similarity">
    <text evidence="4">Belongs to the ATPase gamma chain family.</text>
</comment>
<evidence type="ECO:0000250" key="1"/>
<evidence type="ECO:0000256" key="2">
    <source>
        <dbReference type="SAM" id="MobiDB-lite"/>
    </source>
</evidence>
<evidence type="ECO:0000269" key="3">
    <source>
    </source>
</evidence>
<evidence type="ECO:0000305" key="4"/>
<sequence length="377" mass="41447">MSCSNLTMLVSSKPSLSDSSALSFRSSVSPFQLPNHNTSGPSNPSRSSSVTPVHCGLRDLRDRIESVKNTQKITEAMKLVAAAKVRRAQEAVVGARPFSETLVEVLYNINEQLQTDDIDVPLTKVRPVKKVALVVVTGDRGLCGGFNNYLIKKAEARIRDLKALGIDYTIISVGKKGNSYFIRRPYIPVDKFLEGSNLPTAKDAQAIADDVFSLFVSEEVDKVELLYTKFVSLVKSEPVIHTLLPLSPKGEICDINGNCVDAANDEFFRLTTKEGKLTVERDIIRTKTTDFSPILQFEQDPVQILDALLPLYLNSQILRALQESLASELAARMSAMSSATDNATELKKNLSRVYNRQRQAKITGEILEIVAGADALV</sequence>
<organism>
    <name type="scientific">Nicotiana tabacum</name>
    <name type="common">Common tobacco</name>
    <dbReference type="NCBI Taxonomy" id="4097"/>
    <lineage>
        <taxon>Eukaryota</taxon>
        <taxon>Viridiplantae</taxon>
        <taxon>Streptophyta</taxon>
        <taxon>Embryophyta</taxon>
        <taxon>Tracheophyta</taxon>
        <taxon>Spermatophyta</taxon>
        <taxon>Magnoliopsida</taxon>
        <taxon>eudicotyledons</taxon>
        <taxon>Gunneridae</taxon>
        <taxon>Pentapetalae</taxon>
        <taxon>asterids</taxon>
        <taxon>lamiids</taxon>
        <taxon>Solanales</taxon>
        <taxon>Solanaceae</taxon>
        <taxon>Nicotianoideae</taxon>
        <taxon>Nicotianeae</taxon>
        <taxon>Nicotiana</taxon>
    </lineage>
</organism>
<keyword id="KW-0066">ATP synthesis</keyword>
<keyword id="KW-0139">CF(1)</keyword>
<keyword id="KW-0150">Chloroplast</keyword>
<keyword id="KW-0903">Direct protein sequencing</keyword>
<keyword id="KW-1015">Disulfide bond</keyword>
<keyword id="KW-0375">Hydrogen ion transport</keyword>
<keyword id="KW-0406">Ion transport</keyword>
<keyword id="KW-0472">Membrane</keyword>
<keyword id="KW-0934">Plastid</keyword>
<keyword id="KW-1185">Reference proteome</keyword>
<keyword id="KW-0793">Thylakoid</keyword>
<keyword id="KW-0809">Transit peptide</keyword>
<keyword id="KW-0813">Transport</keyword>
<reference key="1">
    <citation type="journal article" date="1992" name="Plant Mol. Biol.">
        <title>Import and processing of the precursor form of the gamma subunit of the chloroplast ATP synthase from tobacco.</title>
        <authorList>
            <person name="Larsson K.H."/>
            <person name="Napier J.A."/>
            <person name="Gray J.C."/>
        </authorList>
    </citation>
    <scope>NUCLEOTIDE SEQUENCE [MRNA]</scope>
    <scope>PROTEIN SEQUENCE OF 56-60</scope>
    <source>
        <tissue>Leaf</tissue>
    </source>
</reference>